<organism>
    <name type="scientific">Cupiennius salei</name>
    <name type="common">American wandering spider</name>
    <dbReference type="NCBI Taxonomy" id="6928"/>
    <lineage>
        <taxon>Eukaryota</taxon>
        <taxon>Metazoa</taxon>
        <taxon>Ecdysozoa</taxon>
        <taxon>Arthropoda</taxon>
        <taxon>Chelicerata</taxon>
        <taxon>Arachnida</taxon>
        <taxon>Araneae</taxon>
        <taxon>Araneomorphae</taxon>
        <taxon>Entelegynae</taxon>
        <taxon>Lycosoidea</taxon>
        <taxon>Ctenidae</taxon>
        <taxon>Cupiennius</taxon>
    </lineage>
</organism>
<protein>
    <recommendedName>
        <fullName evidence="2">Cupiennin-2e</fullName>
        <shortName evidence="2">Cu-2e</shortName>
    </recommendedName>
</protein>
<keyword id="KW-0027">Amidation</keyword>
<keyword id="KW-0903">Direct protein sequencing</keyword>
<keyword id="KW-0964">Secreted</keyword>
<keyword id="KW-0800">Toxin</keyword>
<name>TXC2E_CUPSA</name>
<feature type="peptide" id="PRO_0000421197" description="Cupiennin-2e" evidence="1">
    <location>
        <begin position="1"/>
        <end position="35"/>
    </location>
</feature>
<feature type="modified residue" description="Glutamic acid 1-amide" evidence="1">
    <location>
        <position position="35"/>
    </location>
</feature>
<evidence type="ECO:0000269" key="1">
    <source>
    </source>
</evidence>
<evidence type="ECO:0000303" key="2">
    <source>
    </source>
</evidence>
<evidence type="ECO:0000305" key="3"/>
<evidence type="ECO:0000305" key="4">
    <source>
    </source>
</evidence>
<comment type="subcellular location">
    <subcellularLocation>
        <location evidence="1">Secreted</location>
    </subcellularLocation>
</comment>
<comment type="tissue specificity">
    <text evidence="4">Expressed by the venom gland.</text>
</comment>
<comment type="mass spectrometry"/>
<comment type="similarity">
    <text evidence="3">Belongs to the cationic peptide 04 (cupiennin) family. 02 subfamily.</text>
</comment>
<accession>B3EWU0</accession>
<sequence>AFGTILKALAKIAAKAVKKLATKPGATYMLKQNLE</sequence>
<proteinExistence type="evidence at protein level"/>
<reference key="1">
    <citation type="journal article" date="2012" name="FEBS J.">
        <title>Multicomponent venom of the spider Cupiennius salei: a bioanalytical investigation applying different strategies.</title>
        <authorList>
            <person name="Trachsel C."/>
            <person name="Siegemund D."/>
            <person name="Kampfer U."/>
            <person name="Kopp L.S."/>
            <person name="Buhr C."/>
            <person name="Grossmann J."/>
            <person name="Luthi C."/>
            <person name="Cunningham M."/>
            <person name="Nentwig W."/>
            <person name="Kuhn-Nentwig L."/>
            <person name="Schurch S."/>
            <person name="Schaller J."/>
        </authorList>
    </citation>
    <scope>PROTEIN SEQUENCE</scope>
    <scope>MASS SPECTROMETRY</scope>
    <scope>AMIDATION AT GLU-35</scope>
    <source>
        <tissue>Venom</tissue>
    </source>
</reference>
<dbReference type="GO" id="GO:0005576">
    <property type="term" value="C:extracellular region"/>
    <property type="evidence" value="ECO:0007669"/>
    <property type="project" value="UniProtKB-SubCell"/>
</dbReference>
<dbReference type="GO" id="GO:0090729">
    <property type="term" value="F:toxin activity"/>
    <property type="evidence" value="ECO:0007669"/>
    <property type="project" value="UniProtKB-KW"/>
</dbReference>